<accession>Q8NQ94</accession>
<sequence length="89" mass="9885">MFAIMTVTGQDHTGIIAAVSTALAELDVNIHNVSQTIMDQWFTMILHVGFDESVLDIATVQERMKPVEKEQGLVIRIQSEALFNAVNEI</sequence>
<reference key="1">
    <citation type="journal article" date="2003" name="Appl. Microbiol. Biotechnol.">
        <title>The Corynebacterium glutamicum genome: features and impacts on biotechnological processes.</title>
        <authorList>
            <person name="Ikeda M."/>
            <person name="Nakagawa S."/>
        </authorList>
    </citation>
    <scope>NUCLEOTIDE SEQUENCE [LARGE SCALE GENOMIC DNA]</scope>
    <source>
        <strain>ATCC 13032 / DSM 20300 / JCM 1318 / BCRC 11384 / CCUG 27702 / LMG 3730 / NBRC 12168 / NCIMB 10025 / NRRL B-2784 / 534</strain>
    </source>
</reference>
<reference key="2">
    <citation type="journal article" date="2003" name="J. Biotechnol.">
        <title>The complete Corynebacterium glutamicum ATCC 13032 genome sequence and its impact on the production of L-aspartate-derived amino acids and vitamins.</title>
        <authorList>
            <person name="Kalinowski J."/>
            <person name="Bathe B."/>
            <person name="Bartels D."/>
            <person name="Bischoff N."/>
            <person name="Bott M."/>
            <person name="Burkovski A."/>
            <person name="Dusch N."/>
            <person name="Eggeling L."/>
            <person name="Eikmanns B.J."/>
            <person name="Gaigalat L."/>
            <person name="Goesmann A."/>
            <person name="Hartmann M."/>
            <person name="Huthmacher K."/>
            <person name="Kraemer R."/>
            <person name="Linke B."/>
            <person name="McHardy A.C."/>
            <person name="Meyer F."/>
            <person name="Moeckel B."/>
            <person name="Pfefferle W."/>
            <person name="Puehler A."/>
            <person name="Rey D.A."/>
            <person name="Rueckert C."/>
            <person name="Rupp O."/>
            <person name="Sahm H."/>
            <person name="Wendisch V.F."/>
            <person name="Wiegraebe I."/>
            <person name="Tauch A."/>
        </authorList>
    </citation>
    <scope>NUCLEOTIDE SEQUENCE [LARGE SCALE GENOMIC DNA]</scope>
    <source>
        <strain>ATCC 13032 / DSM 20300 / JCM 1318 / BCRC 11384 / CCUG 27702 / LMG 3730 / NBRC 12168 / NCIMB 10025 / NRRL B-2784 / 534</strain>
    </source>
</reference>
<protein>
    <recommendedName>
        <fullName evidence="1">UPF0237 protein Cgl1544/cg1742</fullName>
    </recommendedName>
</protein>
<name>Y1544_CORGL</name>
<keyword id="KW-1185">Reference proteome</keyword>
<organism>
    <name type="scientific">Corynebacterium glutamicum (strain ATCC 13032 / DSM 20300 / JCM 1318 / BCRC 11384 / CCUG 27702 / LMG 3730 / NBRC 12168 / NCIMB 10025 / NRRL B-2784 / 534)</name>
    <dbReference type="NCBI Taxonomy" id="196627"/>
    <lineage>
        <taxon>Bacteria</taxon>
        <taxon>Bacillati</taxon>
        <taxon>Actinomycetota</taxon>
        <taxon>Actinomycetes</taxon>
        <taxon>Mycobacteriales</taxon>
        <taxon>Corynebacteriaceae</taxon>
        <taxon>Corynebacterium</taxon>
    </lineage>
</organism>
<proteinExistence type="inferred from homology"/>
<comment type="similarity">
    <text evidence="1">Belongs to the UPF0237 family.</text>
</comment>
<comment type="sequence caution" evidence="2">
    <conflict type="erroneous initiation">
        <sequence resource="EMBL-CDS" id="CAF21553"/>
    </conflict>
</comment>
<gene>
    <name type="ordered locus">Cgl1544</name>
    <name type="ordered locus">cg1742</name>
</gene>
<evidence type="ECO:0000255" key="1">
    <source>
        <dbReference type="HAMAP-Rule" id="MF_01054"/>
    </source>
</evidence>
<evidence type="ECO:0000305" key="2"/>
<dbReference type="EMBL" id="BA000036">
    <property type="protein sequence ID" value="BAB98937.1"/>
    <property type="molecule type" value="Genomic_DNA"/>
</dbReference>
<dbReference type="EMBL" id="BX927152">
    <property type="protein sequence ID" value="CAF21553.1"/>
    <property type="status" value="ALT_INIT"/>
    <property type="molecule type" value="Genomic_DNA"/>
</dbReference>
<dbReference type="RefSeq" id="NP_600760.1">
    <property type="nucleotide sequence ID" value="NC_003450.3"/>
</dbReference>
<dbReference type="RefSeq" id="WP_003856097.1">
    <property type="nucleotide sequence ID" value="NC_006958.1"/>
</dbReference>
<dbReference type="SMR" id="Q8NQ94"/>
<dbReference type="STRING" id="196627.cg1742"/>
<dbReference type="KEGG" id="cgb:cg1742"/>
<dbReference type="KEGG" id="cgl:Cgl1544"/>
<dbReference type="PATRIC" id="fig|196627.13.peg.1512"/>
<dbReference type="eggNOG" id="COG3830">
    <property type="taxonomic scope" value="Bacteria"/>
</dbReference>
<dbReference type="HOGENOM" id="CLU_155669_0_1_11"/>
<dbReference type="OrthoDB" id="9803078at2"/>
<dbReference type="BioCyc" id="CORYNE:G18NG-11129-MONOMER"/>
<dbReference type="Proteomes" id="UP000000582">
    <property type="component" value="Chromosome"/>
</dbReference>
<dbReference type="Proteomes" id="UP000001009">
    <property type="component" value="Chromosome"/>
</dbReference>
<dbReference type="CDD" id="cd04872">
    <property type="entry name" value="ACT_1ZPV"/>
    <property type="match status" value="1"/>
</dbReference>
<dbReference type="Gene3D" id="3.30.70.260">
    <property type="match status" value="1"/>
</dbReference>
<dbReference type="HAMAP" id="MF_01054">
    <property type="entry name" value="UPF0237"/>
    <property type="match status" value="1"/>
</dbReference>
<dbReference type="InterPro" id="IPR045865">
    <property type="entry name" value="ACT-like_dom_sf"/>
</dbReference>
<dbReference type="InterPro" id="IPR002912">
    <property type="entry name" value="ACT_dom"/>
</dbReference>
<dbReference type="InterPro" id="IPR050990">
    <property type="entry name" value="UPF0237/GcvR_regulator"/>
</dbReference>
<dbReference type="InterPro" id="IPR022986">
    <property type="entry name" value="UPF0237_ACT"/>
</dbReference>
<dbReference type="NCBIfam" id="NF001220">
    <property type="entry name" value="PRK00194.1"/>
    <property type="match status" value="1"/>
</dbReference>
<dbReference type="PANTHER" id="PTHR34875">
    <property type="entry name" value="UPF0237 PROTEIN MJ1558"/>
    <property type="match status" value="1"/>
</dbReference>
<dbReference type="PANTHER" id="PTHR34875:SF6">
    <property type="entry name" value="UPF0237 PROTEIN MJ1558"/>
    <property type="match status" value="1"/>
</dbReference>
<dbReference type="Pfam" id="PF13740">
    <property type="entry name" value="ACT_6"/>
    <property type="match status" value="1"/>
</dbReference>
<dbReference type="SUPFAM" id="SSF55021">
    <property type="entry name" value="ACT-like"/>
    <property type="match status" value="1"/>
</dbReference>
<dbReference type="PROSITE" id="PS51671">
    <property type="entry name" value="ACT"/>
    <property type="match status" value="1"/>
</dbReference>
<feature type="chain" id="PRO_0000219898" description="UPF0237 protein Cgl1544/cg1742">
    <location>
        <begin position="1"/>
        <end position="89"/>
    </location>
</feature>
<feature type="domain" description="ACT" evidence="1">
    <location>
        <begin position="4"/>
        <end position="82"/>
    </location>
</feature>